<name>ERA_ECOLI</name>
<proteinExistence type="evidence at protein level"/>
<comment type="function">
    <text evidence="3 5 8 18">An essential GTPase that binds both GDP and GTP, with nucleotide exchange occurring on the order of seconds whereas hydrolysis occurs on the order of minutes. Plays a role in numerous processes, including cell cycle regulation, energy metabolism, as a chaperone for 16S rRNA processing and 30S ribosomal subunit biogenesis. One of at least 4 proteins (Era, RbfA, RimM and RsgA/YjeQ) that assist in the late assembly stage of the 30S ribosomal subunit. Its presence in the 30S subunit may prevent translation initiation. Seems to be critical for maintaining cell growth and cell divison rates; a dramatic reduction in Era protein levels temporarily arrests cell growth just before cytokinesis (at the predivisional two-cell stage) and delays cell division. Era mutant era1 suppresses some temperature-sensitive mutations that affect DNA replication and chromosome partitioning and segregation. The dominant-negative Era-de mutant which is missing residues in a putative effector region, is unable to complement the disruption mutant; upon overproduction it shows a significant decrease in cell viability and a synthetic lethal phenotype in the presence of acetate. Era function probably overlaps RbfA (PubMed:16825789). Binds to the pre-30S ribosomal subunit through several stages of protein assembly (PubMed:20188109).</text>
</comment>
<comment type="activity regulation">
    <text evidence="9">GTPase is competitively inhibited by GDP but not by ADP, ATP, CTP or UTP.</text>
</comment>
<comment type="biophysicochemical properties">
    <kinetics>
        <KM evidence="9 16">15.4 uM for GTP (for His-tagged protein at pH 8.0, 5 mM MgCl(2))</KM>
        <KM evidence="9 16">9 uM for GTP (for overexpressed protein at pH 8.0, 5 mM MgCl(2))</KM>
    </kinetics>
</comment>
<comment type="subunit">
    <text evidence="2 7">Monomer. Binds both 16S rRNA and 30S ribosomal subunits; binding is inhibited by GDP and GTP (PubMed:10094501). Bind preferentially to mature 30S ribosomal subunits over immature subunits in the presence of GMP-PNP (PubMed:27382067). Binds to MazG; GDP-bound Era binds more tightly to MazG than GTP-bound Era (PubMed:19706445).</text>
</comment>
<comment type="subcellular location">
    <subcellularLocation>
        <location evidence="15">Cytoplasm</location>
    </subcellularLocation>
    <subcellularLocation>
        <location evidence="15">Cell inner membrane</location>
        <topology evidence="15">Peripheral membrane protein</topology>
        <orientation evidence="15">Cytoplasmic side</orientation>
    </subcellularLocation>
    <text>Binding is GDP or GTP-dependent, slightly more protein is bound in the presence of GTP than GDP.</text>
</comment>
<comment type="induction">
    <text evidence="18">Expression increases as the growth rate increases. Encoded in the rnc-era-recO operon.</text>
</comment>
<comment type="PTM">
    <text evidence="16">Autophosphorylated.</text>
</comment>
<comment type="mass spectrometry" mass="33682.0" error="5.0" method="Electrospray" evidence="2"/>
<comment type="disruption phenotype">
    <text evidence="10 11 18">Lethality. In the presence of 1% protein cells grow extremely slowly and are blocked at the predivisional two-cell stage of the cell cycle. In the absence of Era and Rnc there is an additional defect in chromosome partitioning. In depletion experiments cells grow normally for 2 hours when protein levels fall. After 4 hours 16S rRNA levels decrease with a concomitant rise in the 17S precursor rRNA molecule (extra sequences at both the 5' and 3' end compared to mature 16S rRNA) and a loss of 70S ribosome assembly.</text>
</comment>
<comment type="miscellaneous">
    <text evidence="3 6 17">When overexpressed partially suppresses the slow growth and decreased 70S ribosome phenotype of an rsgA knockout; RsgA may be involved in 30S ribosomal subunit biogenesis (PubMed:18223068). When overexpressed partially suppresses the 30S ribosomal subunit assembly defects and cold-sensitivity of an rbfA knockout; an era mutant missing residues 39-49 fully suppresses these phenotypes (PubMed:12753192). Overexpression is not able to suppress a rimM disruption phenotype nor a C23U mutation in 16S rRNA. Also suppresses temperature-sensitive mutations in DNA primase (PubMed:9093842).</text>
</comment>
<comment type="similarity">
    <text evidence="1 19">Belongs to the TRAFAC class TrmE-Era-EngA-EngB-Septin-like GTPase superfamily. Era GTPase family.</text>
</comment>
<gene>
    <name type="primary">era</name>
    <name type="synonym">rbaA</name>
    <name type="synonym">sdgE</name>
    <name type="ordered locus">b2566</name>
    <name type="ordered locus">JW2550</name>
</gene>
<accession>P06616</accession>
<accession>Q2MAG4</accession>
<organism>
    <name type="scientific">Escherichia coli (strain K12)</name>
    <dbReference type="NCBI Taxonomy" id="83333"/>
    <lineage>
        <taxon>Bacteria</taxon>
        <taxon>Pseudomonadati</taxon>
        <taxon>Pseudomonadota</taxon>
        <taxon>Gammaproteobacteria</taxon>
        <taxon>Enterobacterales</taxon>
        <taxon>Enterobacteriaceae</taxon>
        <taxon>Escherichia</taxon>
    </lineage>
</organism>
<protein>
    <recommendedName>
        <fullName>GTPase Era</fullName>
        <shortName>ERA</shortName>
    </recommendedName>
    <alternativeName>
        <fullName>GTP-binding protein Era</fullName>
    </alternativeName>
</protein>
<feature type="initiator methionine" description="Removed" evidence="9">
    <location>
        <position position="1"/>
    </location>
</feature>
<feature type="chain" id="PRO_0000180012" description="GTPase Era">
    <location>
        <begin position="2"/>
        <end position="301"/>
    </location>
</feature>
<feature type="domain" description="Era-type G" evidence="1">
    <location>
        <begin position="7"/>
        <end position="175"/>
    </location>
</feature>
<feature type="domain" description="KH type-2">
    <location>
        <begin position="206"/>
        <end position="283"/>
    </location>
</feature>
<feature type="region of interest" description="G1" evidence="1">
    <location>
        <begin position="15"/>
        <end position="22"/>
    </location>
</feature>
<feature type="region of interest" description="G2" evidence="1">
    <location>
        <begin position="41"/>
        <end position="45"/>
    </location>
</feature>
<feature type="region of interest" description="G3" evidence="1">
    <location>
        <begin position="62"/>
        <end position="65"/>
    </location>
</feature>
<feature type="region of interest" description="G4" evidence="1">
    <location>
        <begin position="124"/>
        <end position="127"/>
    </location>
</feature>
<feature type="region of interest" description="G5" evidence="1">
    <location>
        <begin position="154"/>
        <end position="156"/>
    </location>
</feature>
<feature type="binding site" evidence="12">
    <location>
        <begin position="15"/>
        <end position="22"/>
    </location>
    <ligand>
        <name>GTP</name>
        <dbReference type="ChEBI" id="CHEBI:37565"/>
    </ligand>
</feature>
<feature type="binding site" evidence="12">
    <location>
        <begin position="62"/>
        <end position="66"/>
    </location>
    <ligand>
        <name>GTP</name>
        <dbReference type="ChEBI" id="CHEBI:37565"/>
    </ligand>
</feature>
<feature type="binding site" evidence="12">
    <location>
        <begin position="124"/>
        <end position="127"/>
    </location>
    <ligand>
        <name>GTP</name>
        <dbReference type="ChEBI" id="CHEBI:37565"/>
    </ligand>
</feature>
<feature type="modified residue" description="Phosphothreonine; by autocatalysis" evidence="14">
    <location>
        <position position="36"/>
    </location>
</feature>
<feature type="modified residue" description="Phosphoserine; by autocatalysis" evidence="14">
    <location>
        <position position="37"/>
    </location>
</feature>
<feature type="mutagenesis site" description="In era770; 20-fold reduction in GTP-binding. Confers growth sensitivity at 42 degrees Celsius; when associated with an unpublished 22 residue replacement in the C-terminus." evidence="10">
    <original>C</original>
    <variation>A</variation>
    <location>
        <position position="8"/>
    </location>
</feature>
<feature type="mutagenesis site" description="In era1; suppresses a number of temperature-sensitive mutations affecting cell cycle." evidence="4 18">
    <original>P</original>
    <variation>R</variation>
    <location>
        <position position="17"/>
    </location>
</feature>
<feature type="mutagenesis site" description="Confers sensitivity to cold." evidence="4 18">
    <original>P</original>
    <variation>V</variation>
    <location>
        <position position="17"/>
    </location>
</feature>
<feature type="mutagenesis site" description="Confers sensitivity to cold; overexpression does not suppress an rbfA disruption." evidence="13">
    <original>N</original>
    <variation>S</variation>
    <location>
        <position position="26"/>
    </location>
</feature>
<feature type="mutagenesis site" description="In Era-de; does not complement a disruption mutant, overexpression in a wt cells inhibits growth. Binds GTP poorly, Km for GTP increases 5-fold, Vmax for GTPase is 55% that of wt. Does not autophosphorylate. Complements cold-sensitivity and 16S rRNA processing in an rbfA disruption mutant." evidence="3">
    <original>KAQTTRHRIVG</original>
    <variation>R</variation>
    <location>
        <begin position="39"/>
        <end position="49"/>
    </location>
</feature>
<feature type="mutagenesis site" description="Does not complement a disruption mutant, Km for GTP increases 12-fold, Vmax for GTPase is 49% that of wt. Overexpression partially suppresses an rbfA disruption." evidence="3 16">
    <original>TT</original>
    <variation>AA</variation>
    <location>
        <begin position="42"/>
        <end position="43"/>
    </location>
</feature>
<feature type="mutagenesis site" description="Confers sensitivity to cold; overexpression partially suppresses an rbfA disruption." evidence="13">
    <original>A</original>
    <variation>D</variation>
    <location>
        <position position="156"/>
    </location>
</feature>
<feature type="mutagenesis site" description="Confers sensitivity to cold, cells do not divide properly but do replicate DNA and segregate nucleoids normally. 16S rRNA processing is decreased, ribosome assembly is defective. Suppressed by overexpression of RsmA. Overexpression does not suppress an rbfA disruption, while at 37 degrees Celsius the rbfA/era E220K mutant grows very poorly, a dominant-negative effect. This mutant still binds 30S ribosomes." evidence="3 13">
    <original>E</original>
    <variation>K</variation>
    <location>
        <position position="200"/>
    </location>
</feature>
<feature type="strand" evidence="20">
    <location>
        <begin position="7"/>
        <end position="14"/>
    </location>
</feature>
<feature type="strand" evidence="20">
    <location>
        <begin position="16"/>
        <end position="20"/>
    </location>
</feature>
<feature type="helix" evidence="20">
    <location>
        <begin position="21"/>
        <end position="29"/>
    </location>
</feature>
<feature type="strand" evidence="20">
    <location>
        <begin position="32"/>
        <end position="35"/>
    </location>
</feature>
<feature type="strand" evidence="20">
    <location>
        <begin position="47"/>
        <end position="53"/>
    </location>
</feature>
<feature type="strand" evidence="20">
    <location>
        <begin position="56"/>
        <end position="65"/>
    </location>
</feature>
<feature type="helix" evidence="20">
    <location>
        <begin position="68"/>
        <end position="78"/>
    </location>
</feature>
<feature type="strand" evidence="20">
    <location>
        <begin position="89"/>
        <end position="97"/>
    </location>
</feature>
<feature type="helix" evidence="20">
    <location>
        <begin position="103"/>
        <end position="113"/>
    </location>
</feature>
<feature type="strand" evidence="20">
    <location>
        <begin position="114"/>
        <end position="117"/>
    </location>
</feature>
<feature type="strand" evidence="20">
    <location>
        <begin position="119"/>
        <end position="125"/>
    </location>
</feature>
<feature type="turn" evidence="20">
    <location>
        <begin position="126"/>
        <end position="128"/>
    </location>
</feature>
<feature type="helix" evidence="20">
    <location>
        <begin position="132"/>
        <end position="143"/>
    </location>
</feature>
<feature type="strand" evidence="20">
    <location>
        <begin position="149"/>
        <end position="153"/>
    </location>
</feature>
<feature type="turn" evidence="20">
    <location>
        <begin position="156"/>
        <end position="161"/>
    </location>
</feature>
<feature type="helix" evidence="20">
    <location>
        <begin position="162"/>
        <end position="170"/>
    </location>
</feature>
<feature type="helix" evidence="20">
    <location>
        <begin position="190"/>
        <end position="206"/>
    </location>
</feature>
<feature type="helix" evidence="20">
    <location>
        <begin position="207"/>
        <end position="209"/>
    </location>
</feature>
<feature type="strand" evidence="20">
    <location>
        <begin position="214"/>
        <end position="222"/>
    </location>
</feature>
<feature type="strand" evidence="20">
    <location>
        <begin position="228"/>
        <end position="239"/>
    </location>
</feature>
<feature type="helix" evidence="20">
    <location>
        <begin position="240"/>
        <end position="247"/>
    </location>
</feature>
<feature type="helix" evidence="20">
    <location>
        <begin position="249"/>
        <end position="251"/>
    </location>
</feature>
<feature type="helix" evidence="20">
    <location>
        <begin position="252"/>
        <end position="268"/>
    </location>
</feature>
<feature type="strand" evidence="20">
    <location>
        <begin position="273"/>
        <end position="281"/>
    </location>
</feature>
<feature type="helix" evidence="20">
    <location>
        <begin position="287"/>
        <end position="292"/>
    </location>
</feature>
<evidence type="ECO:0000255" key="1">
    <source>
        <dbReference type="PROSITE-ProRule" id="PRU01050"/>
    </source>
</evidence>
<evidence type="ECO:0000269" key="2">
    <source>
    </source>
</evidence>
<evidence type="ECO:0000269" key="3">
    <source>
    </source>
</evidence>
<evidence type="ECO:0000269" key="4">
    <source>
    </source>
</evidence>
<evidence type="ECO:0000269" key="5">
    <source>
    </source>
</evidence>
<evidence type="ECO:0000269" key="6">
    <source>
    </source>
</evidence>
<evidence type="ECO:0000269" key="7">
    <source>
    </source>
</evidence>
<evidence type="ECO:0000269" key="8">
    <source>
    </source>
</evidence>
<evidence type="ECO:0000269" key="9">
    <source>
    </source>
</evidence>
<evidence type="ECO:0000269" key="10">
    <source>
    </source>
</evidence>
<evidence type="ECO:0000269" key="11">
    <source>
    </source>
</evidence>
<evidence type="ECO:0000269" key="12">
    <source>
    </source>
</evidence>
<evidence type="ECO:0000269" key="13">
    <source>
    </source>
</evidence>
<evidence type="ECO:0000269" key="14">
    <source>
    </source>
</evidence>
<evidence type="ECO:0000269" key="15">
    <source>
    </source>
</evidence>
<evidence type="ECO:0000269" key="16">
    <source>
    </source>
</evidence>
<evidence type="ECO:0000269" key="17">
    <source>
    </source>
</evidence>
<evidence type="ECO:0000269" key="18">
    <source>
    </source>
</evidence>
<evidence type="ECO:0000305" key="19"/>
<evidence type="ECO:0007829" key="20">
    <source>
        <dbReference type="PDB" id="1EGA"/>
    </source>
</evidence>
<dbReference type="EMBL" id="M14658">
    <property type="protein sequence ID" value="AAA03242.1"/>
    <property type="molecule type" value="Unassigned_DNA"/>
</dbReference>
<dbReference type="EMBL" id="D64044">
    <property type="protein sequence ID" value="BAA10913.1"/>
    <property type="molecule type" value="Genomic_DNA"/>
</dbReference>
<dbReference type="EMBL" id="U36841">
    <property type="protein sequence ID" value="AAA79828.1"/>
    <property type="molecule type" value="Genomic_DNA"/>
</dbReference>
<dbReference type="EMBL" id="U00096">
    <property type="protein sequence ID" value="AAC75619.1"/>
    <property type="molecule type" value="Genomic_DNA"/>
</dbReference>
<dbReference type="EMBL" id="AP009048">
    <property type="protein sequence ID" value="BAE76742.1"/>
    <property type="molecule type" value="Genomic_DNA"/>
</dbReference>
<dbReference type="EMBL" id="X02673">
    <property type="protein sequence ID" value="CAA26505.1"/>
    <property type="molecule type" value="Genomic_DNA"/>
</dbReference>
<dbReference type="PIR" id="S44713">
    <property type="entry name" value="RGECGT"/>
</dbReference>
<dbReference type="RefSeq" id="NP_417061.1">
    <property type="nucleotide sequence ID" value="NC_000913.3"/>
</dbReference>
<dbReference type="RefSeq" id="WP_000020749.1">
    <property type="nucleotide sequence ID" value="NZ_STEB01000011.1"/>
</dbReference>
<dbReference type="PDB" id="1EGA">
    <property type="method" value="X-ray"/>
    <property type="resolution" value="2.40 A"/>
    <property type="chains" value="A/B=1-301"/>
</dbReference>
<dbReference type="PDB" id="3IEU">
    <property type="method" value="X-ray"/>
    <property type="resolution" value="2.80 A"/>
    <property type="chains" value="A/B=1-301"/>
</dbReference>
<dbReference type="PDBsum" id="1EGA"/>
<dbReference type="PDBsum" id="3IEU"/>
<dbReference type="SMR" id="P06616"/>
<dbReference type="BioGRID" id="4263220">
    <property type="interactions" value="482"/>
</dbReference>
<dbReference type="BioGRID" id="851375">
    <property type="interactions" value="7"/>
</dbReference>
<dbReference type="DIP" id="DIP-9521N"/>
<dbReference type="FunCoup" id="P06616">
    <property type="interactions" value="768"/>
</dbReference>
<dbReference type="IntAct" id="P06616">
    <property type="interactions" value="29"/>
</dbReference>
<dbReference type="STRING" id="511145.b2566"/>
<dbReference type="iPTMnet" id="P06616"/>
<dbReference type="jPOST" id="P06616"/>
<dbReference type="PaxDb" id="511145-b2566"/>
<dbReference type="EnsemblBacteria" id="AAC75619">
    <property type="protein sequence ID" value="AAC75619"/>
    <property type="gene ID" value="b2566"/>
</dbReference>
<dbReference type="GeneID" id="75172680"/>
<dbReference type="GeneID" id="947036"/>
<dbReference type="KEGG" id="ecj:JW2550"/>
<dbReference type="KEGG" id="eco:b2566"/>
<dbReference type="KEGG" id="ecoc:C3026_14215"/>
<dbReference type="PATRIC" id="fig|1411691.4.peg.4168"/>
<dbReference type="EchoBASE" id="EB0266"/>
<dbReference type="eggNOG" id="COG1159">
    <property type="taxonomic scope" value="Bacteria"/>
</dbReference>
<dbReference type="HOGENOM" id="CLU_038009_1_2_6"/>
<dbReference type="InParanoid" id="P06616"/>
<dbReference type="OMA" id="WAEVDVI"/>
<dbReference type="OrthoDB" id="9805918at2"/>
<dbReference type="PhylomeDB" id="P06616"/>
<dbReference type="BioCyc" id="EcoCyc:EG10270-MONOMER"/>
<dbReference type="BioCyc" id="MetaCyc:EG10270-MONOMER"/>
<dbReference type="SABIO-RK" id="P06616"/>
<dbReference type="EvolutionaryTrace" id="P06616"/>
<dbReference type="PRO" id="PR:P06616"/>
<dbReference type="Proteomes" id="UP000000625">
    <property type="component" value="Chromosome"/>
</dbReference>
<dbReference type="GO" id="GO:0005737">
    <property type="term" value="C:cytoplasm"/>
    <property type="evidence" value="ECO:0000304"/>
    <property type="project" value="UniProtKB"/>
</dbReference>
<dbReference type="GO" id="GO:0005829">
    <property type="term" value="C:cytosol"/>
    <property type="evidence" value="ECO:0000314"/>
    <property type="project" value="EcoCyc"/>
</dbReference>
<dbReference type="GO" id="GO:0005886">
    <property type="term" value="C:plasma membrane"/>
    <property type="evidence" value="ECO:0000314"/>
    <property type="project" value="UniProtKB"/>
</dbReference>
<dbReference type="GO" id="GO:0005525">
    <property type="term" value="F:GTP binding"/>
    <property type="evidence" value="ECO:0000314"/>
    <property type="project" value="UniProtKB"/>
</dbReference>
<dbReference type="GO" id="GO:0003924">
    <property type="term" value="F:GTPase activity"/>
    <property type="evidence" value="ECO:0000314"/>
    <property type="project" value="UniProtKB"/>
</dbReference>
<dbReference type="GO" id="GO:0097216">
    <property type="term" value="F:guanosine tetraphosphate binding"/>
    <property type="evidence" value="ECO:0000314"/>
    <property type="project" value="EcoCyc"/>
</dbReference>
<dbReference type="GO" id="GO:0043024">
    <property type="term" value="F:ribosomal small subunit binding"/>
    <property type="evidence" value="ECO:0000314"/>
    <property type="project" value="UniProtKB"/>
</dbReference>
<dbReference type="GO" id="GO:0003723">
    <property type="term" value="F:RNA binding"/>
    <property type="evidence" value="ECO:0000314"/>
    <property type="project" value="EcoCyc"/>
</dbReference>
<dbReference type="GO" id="GO:0019843">
    <property type="term" value="F:rRNA binding"/>
    <property type="evidence" value="ECO:0000318"/>
    <property type="project" value="GO_Central"/>
</dbReference>
<dbReference type="GO" id="GO:0070181">
    <property type="term" value="F:small ribosomal subunit rRNA binding"/>
    <property type="evidence" value="ECO:0000314"/>
    <property type="project" value="UniProtKB"/>
</dbReference>
<dbReference type="GO" id="GO:0006468">
    <property type="term" value="P:protein phosphorylation"/>
    <property type="evidence" value="ECO:0000314"/>
    <property type="project" value="UniProtKB"/>
</dbReference>
<dbReference type="GO" id="GO:0000028">
    <property type="term" value="P:ribosomal small subunit assembly"/>
    <property type="evidence" value="ECO:0000314"/>
    <property type="project" value="EcoCyc"/>
</dbReference>
<dbReference type="GO" id="GO:0042274">
    <property type="term" value="P:ribosomal small subunit biogenesis"/>
    <property type="evidence" value="ECO:0000314"/>
    <property type="project" value="EcoCyc"/>
</dbReference>
<dbReference type="CDD" id="cd04163">
    <property type="entry name" value="Era"/>
    <property type="match status" value="1"/>
</dbReference>
<dbReference type="CDD" id="cd22534">
    <property type="entry name" value="KH-II_Era"/>
    <property type="match status" value="1"/>
</dbReference>
<dbReference type="FunFam" id="3.30.300.20:FF:000003">
    <property type="entry name" value="GTPase Era"/>
    <property type="match status" value="1"/>
</dbReference>
<dbReference type="FunFam" id="3.40.50.300:FF:000094">
    <property type="entry name" value="GTPase Era"/>
    <property type="match status" value="1"/>
</dbReference>
<dbReference type="Gene3D" id="3.30.300.20">
    <property type="match status" value="1"/>
</dbReference>
<dbReference type="Gene3D" id="3.40.50.300">
    <property type="entry name" value="P-loop containing nucleotide triphosphate hydrolases"/>
    <property type="match status" value="1"/>
</dbReference>
<dbReference type="HAMAP" id="MF_00367">
    <property type="entry name" value="GTPase_Era"/>
    <property type="match status" value="1"/>
</dbReference>
<dbReference type="InterPro" id="IPR030388">
    <property type="entry name" value="G_ERA_dom"/>
</dbReference>
<dbReference type="InterPro" id="IPR006073">
    <property type="entry name" value="GTP-bd"/>
</dbReference>
<dbReference type="InterPro" id="IPR005662">
    <property type="entry name" value="GTPase_Era-like"/>
</dbReference>
<dbReference type="InterPro" id="IPR015946">
    <property type="entry name" value="KH_dom-like_a/b"/>
</dbReference>
<dbReference type="InterPro" id="IPR004044">
    <property type="entry name" value="KH_dom_type_2"/>
</dbReference>
<dbReference type="InterPro" id="IPR009019">
    <property type="entry name" value="KH_sf_prok-type"/>
</dbReference>
<dbReference type="InterPro" id="IPR027417">
    <property type="entry name" value="P-loop_NTPase"/>
</dbReference>
<dbReference type="InterPro" id="IPR005225">
    <property type="entry name" value="Small_GTP-bd"/>
</dbReference>
<dbReference type="NCBIfam" id="TIGR00436">
    <property type="entry name" value="era"/>
    <property type="match status" value="1"/>
</dbReference>
<dbReference type="NCBIfam" id="NF000908">
    <property type="entry name" value="PRK00089.1"/>
    <property type="match status" value="1"/>
</dbReference>
<dbReference type="NCBIfam" id="TIGR00231">
    <property type="entry name" value="small_GTP"/>
    <property type="match status" value="1"/>
</dbReference>
<dbReference type="PANTHER" id="PTHR42698">
    <property type="entry name" value="GTPASE ERA"/>
    <property type="match status" value="1"/>
</dbReference>
<dbReference type="PANTHER" id="PTHR42698:SF1">
    <property type="entry name" value="GTPASE ERA, MITOCHONDRIAL"/>
    <property type="match status" value="1"/>
</dbReference>
<dbReference type="Pfam" id="PF07650">
    <property type="entry name" value="KH_2"/>
    <property type="match status" value="1"/>
</dbReference>
<dbReference type="Pfam" id="PF01926">
    <property type="entry name" value="MMR_HSR1"/>
    <property type="match status" value="1"/>
</dbReference>
<dbReference type="SUPFAM" id="SSF52540">
    <property type="entry name" value="P-loop containing nucleoside triphosphate hydrolases"/>
    <property type="match status" value="1"/>
</dbReference>
<dbReference type="SUPFAM" id="SSF54814">
    <property type="entry name" value="Prokaryotic type KH domain (KH-domain type II)"/>
    <property type="match status" value="1"/>
</dbReference>
<dbReference type="PROSITE" id="PS51713">
    <property type="entry name" value="G_ERA"/>
    <property type="match status" value="1"/>
</dbReference>
<dbReference type="PROSITE" id="PS50823">
    <property type="entry name" value="KH_TYPE_2"/>
    <property type="match status" value="1"/>
</dbReference>
<sequence length="301" mass="33810">MSIDKSYCGFIAIVGRPNVGKSTLLNKLLGQKISITSRKAQTTRHRIVGIHTEGAYQAIYVDTPGLHMEEKRAINRLMNKAASSSIGDVELVIFVVEGTRWTPDDEMVLNKLREGKAPVILAVNKVDNVQEKADLLPHLQFLASQMNFLDIVPISAETGLNVDTIAAIVRKHLPEATHHFPEDYITDRSQRFMASEIIREKLMRFLGAELPYSVTVEIERFVSNERGGYDINGLILVEREGQKKMVIGNKGAKIKTIGIEARKDMQEMFEAPVHLELWVKVKSGWADDERALRSLGYVDDL</sequence>
<reference key="1">
    <citation type="journal article" date="1986" name="Proc. Natl. Acad. Sci. U.S.A.">
        <title>A GTP-binding protein of Escherichia coli has homology to yeast RAS proteins.</title>
        <authorList>
            <person name="Ahnn J."/>
            <person name="March P.E."/>
            <person name="Takiff H.E."/>
            <person name="Inouye M."/>
        </authorList>
    </citation>
    <scope>NUCLEOTIDE SEQUENCE [GENOMIC DNA]</scope>
    <scope>GTP-BINDING</scope>
</reference>
<reference key="2">
    <citation type="submission" date="1995-09" db="EMBL/GenBank/DDBJ databases">
        <authorList>
            <person name="Nashimoto H."/>
            <person name="Saito N."/>
        </authorList>
    </citation>
    <scope>NUCLEOTIDE SEQUENCE [GENOMIC DNA]</scope>
    <source>
        <strain>K12 / W3110</strain>
    </source>
</reference>
<reference key="3">
    <citation type="journal article" date="1997" name="Science">
        <title>The complete genome sequence of Escherichia coli K-12.</title>
        <authorList>
            <person name="Blattner F.R."/>
            <person name="Plunkett G. III"/>
            <person name="Bloch C.A."/>
            <person name="Perna N.T."/>
            <person name="Burland V."/>
            <person name="Riley M."/>
            <person name="Collado-Vides J."/>
            <person name="Glasner J.D."/>
            <person name="Rode C.K."/>
            <person name="Mayhew G.F."/>
            <person name="Gregor J."/>
            <person name="Davis N.W."/>
            <person name="Kirkpatrick H.A."/>
            <person name="Goeden M.A."/>
            <person name="Rose D.J."/>
            <person name="Mau B."/>
            <person name="Shao Y."/>
        </authorList>
    </citation>
    <scope>NUCLEOTIDE SEQUENCE [LARGE SCALE GENOMIC DNA]</scope>
    <source>
        <strain>K12 / MG1655 / ATCC 47076</strain>
    </source>
</reference>
<reference key="4">
    <citation type="journal article" date="2006" name="Mol. Syst. Biol.">
        <title>Highly accurate genome sequences of Escherichia coli K-12 strains MG1655 and W3110.</title>
        <authorList>
            <person name="Hayashi K."/>
            <person name="Morooka N."/>
            <person name="Yamamoto Y."/>
            <person name="Fujita K."/>
            <person name="Isono K."/>
            <person name="Choi S."/>
            <person name="Ohtsubo E."/>
            <person name="Baba T."/>
            <person name="Wanner B.L."/>
            <person name="Mori H."/>
            <person name="Horiuchi T."/>
        </authorList>
    </citation>
    <scope>NUCLEOTIDE SEQUENCE [LARGE SCALE GENOMIC DNA]</scope>
    <source>
        <strain>K12 / W3110 / ATCC 27325 / DSM 5911</strain>
    </source>
</reference>
<reference key="5">
    <citation type="journal article" date="1985" name="Nucleic Acids Res.">
        <title>The DNA sequence of the gene (rnc) encoding ribonuclease III of Escherichia coli.</title>
        <authorList>
            <person name="March P.E."/>
            <person name="Ahnn J."/>
            <person name="Inouye M."/>
        </authorList>
    </citation>
    <scope>NUCLEOTIDE SEQUENCE [GENOMIC DNA] OF 1-50</scope>
    <source>
        <strain>K12 / CS520</strain>
    </source>
</reference>
<reference key="6">
    <citation type="journal article" date="1990" name="J. Biol. Chem.">
        <title>Expression and characterization of RNase III and Era proteins. Products of the rnc operon of Escherichia coli.</title>
        <authorList>
            <person name="Chen S.M."/>
            <person name="Takiff H.E."/>
            <person name="Barber A.M."/>
            <person name="Dubois G.C."/>
            <person name="Bardwell J.C."/>
            <person name="Court D.L."/>
        </authorList>
    </citation>
    <scope>PROTEIN SEQUENCE OF 2-40</scope>
    <scope>GTP-BINDING</scope>
    <scope>GDP-BINDING</scope>
    <scope>CATALYTIC ACTIVITY</scope>
    <scope>ACTIVITY REGULATION</scope>
    <scope>BIOPHYSICOCHEMICAL PROPERTIES</scope>
    <source>
        <strain>K12 / W3110</strain>
    </source>
</reference>
<reference key="7">
    <citation type="journal article" date="1999" name="FEBS Lett.">
        <title>Purification, characterization and crystallization of ERA, an essential GTPase from Escherichia coli.</title>
        <authorList>
            <person name="Chen X."/>
            <person name="Chen S.M."/>
            <person name="Powell B.S."/>
            <person name="Court D.L."/>
            <person name="Ji X."/>
        </authorList>
    </citation>
    <scope>PROTEIN SEQUENCE OF N-TERMINUS</scope>
    <scope>MASS SPECTROMETRY</scope>
    <scope>GTPASE ACTIVITY</scope>
    <scope>SUBUNIT</scope>
    <scope>PRELIMINARY CRYSTALLIZATION</scope>
    <source>
        <strain>K12 / W3110</strain>
    </source>
</reference>
<reference key="8">
    <citation type="journal article" date="1994" name="Mol. Microbiol.">
        <title>Characterization of the autophosphorylation of Era, an essential Escherichia coli GTPase.</title>
        <authorList>
            <person name="Sood P."/>
            <person name="Lerner C.G."/>
            <person name="Shimamoto T."/>
            <person name="Lu Q."/>
            <person name="Inouye M."/>
        </authorList>
    </citation>
    <scope>PARTIAL PROTEIN SEQUENCE</scope>
    <scope>SEQUENCE REVISION TO C-TERMINUS</scope>
    <scope>PHOSPHORYLATION AT THR-36 AND SER-37</scope>
</reference>
<reference key="9">
    <citation type="journal article" date="1989" name="J. Bacteriol.">
        <title>Genetic analysis of the rnc operon of Escherichia coli.</title>
        <authorList>
            <person name="Takiff H.E."/>
            <person name="Chen S.M."/>
            <person name="Court D.L."/>
        </authorList>
    </citation>
    <scope>DISRUPTION PHENOTYPE</scope>
    <scope>OPERON STRUCTURE</scope>
    <source>
        <strain>K12 / W3110</strain>
    </source>
</reference>
<reference key="10">
    <citation type="journal article" date="1989" name="J. Bacteriol.">
        <title>Temperature-sensitive lethal mutant of era, a G protein in Escherichia coli.</title>
        <authorList>
            <person name="Inada T."/>
            <person name="Kawakami K."/>
            <person name="Chen S.M."/>
            <person name="Takiff H.E."/>
            <person name="Court D.L."/>
            <person name="Nakamura Y."/>
        </authorList>
    </citation>
    <scope>DISRUPTION PHENOTYPE</scope>
    <scope>MUTAGENESIS OF CYS-8</scope>
    <scope>OPERON STRUCTURE</scope>
    <source>
        <strain>K12</strain>
    </source>
</reference>
<reference key="11">
    <citation type="journal article" date="1992" name="FEMS Microbiol. Lett.">
        <title>Cold-sensitive growth and decreased GTP-hydrolytic activity from substitution of Pro17 for Val in Era, an essential Escherichia coli GTPase.</title>
        <authorList>
            <person name="Lerner C.G."/>
            <person name="Sood P."/>
            <person name="Ahnn J."/>
            <person name="Inouye M."/>
        </authorList>
    </citation>
    <scope>MUTAGENESIS OF PRO-17</scope>
</reference>
<reference key="12">
    <citation type="journal article" date="1994" name="J. Bacteriol.">
        <title>GTPase-dependent signaling in bacteria: characterization of a membrane-binding site for era in Escherichia coli.</title>
        <authorList>
            <person name="Lin Y.P."/>
            <person name="Sharer J.D."/>
            <person name="March P.E."/>
        </authorList>
    </citation>
    <scope>SUBCELLULAR LOCATION</scope>
    <source>
        <strain>K12 / SB221</strain>
    </source>
</reference>
<reference key="13">
    <citation type="journal article" date="1995" name="FEMS Microbiol. Lett.">
        <title>Cold-sensitive conditional mutations in Era, an essential Escherichia coli GTPase, isolated by localized random polymerase chain reaction mutagenesis.</title>
        <authorList>
            <person name="Lerner C.G."/>
            <person name="Gulati P.S."/>
            <person name="Inouye M."/>
        </authorList>
    </citation>
    <scope>MUTAGENESIS OF ASN-26; ALA-156 AND GLU-200</scope>
</reference>
<reference key="14">
    <citation type="journal article" date="1996" name="FEMS Microbiol. Lett.">
        <title>Mutational analysis of Era, an essential GTP-binding protein of Escherichia coli.</title>
        <authorList>
            <person name="Shimamoto T."/>
            <person name="Inouye M."/>
        </authorList>
    </citation>
    <scope>BIOPHYSICOCHEMICAL PROPERTIES</scope>
    <scope>AUTOPHOSPHORYLATION</scope>
    <scope>MUTAGENESIS OF 40-ALA--GLY-49 AND 42-THR-THR-43</scope>
    <source>
        <strain>K12 / ATCC 35607 / JM83</strain>
    </source>
</reference>
<reference key="15">
    <citation type="journal article" date="1997" name="Electrophoresis">
        <title>Escherichia coli proteome analysis using the gene-protein database.</title>
        <authorList>
            <person name="VanBogelen R.A."/>
            <person name="Abshire K.Z."/>
            <person name="Moldover B."/>
            <person name="Olson E.R."/>
            <person name="Neidhardt F.C."/>
        </authorList>
    </citation>
    <scope>IDENTIFICATION BY 2D-GEL</scope>
</reference>
<reference key="16">
    <citation type="journal article" date="1997" name="Genetics">
        <title>Isolation and characterization of suppressors of two Escherichia coli dnaG mutations, dnaG2903 and parB.</title>
        <authorList>
            <person name="Britton R.A."/>
            <person name="Lupski J.R."/>
        </authorList>
    </citation>
    <scope>SUPPRESSION OF DNA PRIMASE MUTATIONS</scope>
</reference>
<reference key="17">
    <citation type="journal article" date="1998" name="J. Bacteriol.">
        <title>The gene for 16S rRNA methyltransferase (ksgA) functions as a multicopy suppressor for a cold-sensitive mutant of era, an essential RAS-like GTP-binding protein in Escherichia coli.</title>
        <authorList>
            <person name="Lu Q."/>
            <person name="Inouye M."/>
        </authorList>
    </citation>
    <scope>COLD-SENSITIVITY MUTANT SUPPRESSED BY RSMA</scope>
    <source>
        <strain>K12 / ATCC 35607 / JM83</strain>
    </source>
</reference>
<reference key="18">
    <citation type="journal article" date="1998" name="Mol. Microbiol.">
        <title>Cell cycle arrest in Era GTPase mutants: a potential growth rate-regulated checkpoint in Escherichia coli.</title>
        <authorList>
            <person name="Britton R.A."/>
            <person name="Powell B.S."/>
            <person name="Dasgupta S."/>
            <person name="Sun Q."/>
            <person name="Margolin W."/>
            <person name="Lupski J.R."/>
            <person name="Court D.L."/>
        </authorList>
    </citation>
    <scope>FUNCTION IN CELL CYCLE</scope>
    <scope>SUPPRESSION OF CELL CYCLE MUTATIONS</scope>
    <scope>MUTAGENESIS OF PRO-17</scope>
    <scope>INDUCTION</scope>
    <scope>DISRUPTION PHENOTYPE</scope>
    <source>
        <strain>K12 / W3110</strain>
    </source>
</reference>
<reference key="19">
    <citation type="journal article" date="1999" name="Biochem. Biophys. Res. Commun.">
        <title>Era, an essential Escherichia coli small G-protein, binds to the 30S ribosomal subunit.</title>
        <authorList>
            <person name="Sayed A."/>
            <person name="Matsuyama S."/>
            <person name="Inouye M."/>
        </authorList>
    </citation>
    <scope>SMALL RRNA-BINDING</scope>
    <scope>INTERACTION WITH 30S RIBOSOMAL SUBUNIT</scope>
</reference>
<reference key="20">
    <citation type="journal article" date="2000" name="J. Bacteriol.">
        <title>Analysis of guanine nucleotide binding and exchange kinetics of the Escherichia coli GTPase Era.</title>
        <authorList>
            <person name="Sullivan S.M."/>
            <person name="Mishra R."/>
            <person name="Neubig R.R."/>
            <person name="Maddock J.R."/>
        </authorList>
    </citation>
    <scope>GTP-BINDING</scope>
    <scope>GDP-BINDING</scope>
    <scope>GUANINE NUCLEOTIDE EXCHANGE RATES</scope>
    <source>
        <strain>K12 / W3110</strain>
    </source>
</reference>
<reference key="21">
    <citation type="journal article" date="2002" name="J. Bacteriol.">
        <title>MazG, a nucleoside triphosphate pyrophosphohydrolase, interacts with Era, an essential GTPase in Escherichia coli.</title>
        <authorList>
            <person name="Zhang J."/>
            <person name="Inouye M."/>
        </authorList>
    </citation>
    <scope>INTERACTION WITH MAZG</scope>
</reference>
<reference key="22">
    <citation type="journal article" date="2002" name="J. Mol. Microbiol. Biotechnol.">
        <title>Specific growth inhibition by acetate of an Escherichia coli strain expressing Era-dE, a dominant negative Era mutant.</title>
        <authorList>
            <person name="Inoue K."/>
            <person name="Chen J."/>
            <person name="Kato I."/>
            <person name="Inouye M."/>
        </authorList>
    </citation>
    <scope>PROBABLE FUNCTION IN ENERGY METABOLISM</scope>
    <source>
        <strain>K12 / DH5-alpha</strain>
    </source>
</reference>
<reference key="23">
    <citation type="journal article" date="2003" name="Mol. Microbiol.">
        <title>Suppression of defective ribosome assembly in a rbfA deletion mutant by overexpression of Era, an essential GTPase in Escherichia coli.</title>
        <authorList>
            <person name="Inoue K."/>
            <person name="Alsina J."/>
            <person name="Chen J."/>
            <person name="Inouye M."/>
        </authorList>
    </citation>
    <scope>FUNCTION IN RIBOSOME ASSEMBLY</scope>
    <scope>FUNCTION IN RRNA PROCESSING</scope>
    <scope>DEPLETION STUDIES</scope>
    <scope>MUTAGENESIS OF 39-LYS--GLY-49; 42-THR-THR-43 AND GLU-200</scope>
    <scope>SUPPRESSION OF RBFA DISRUPTION MUTANTS</scope>
    <source>
        <strain>K12 / ATCC 35607 / JM83</strain>
        <strain>K12 / MC4100</strain>
    </source>
</reference>
<reference key="24">
    <citation type="journal article" date="2006" name="J. Mol. Microbiol. Biotechnol.">
        <title>Era and RbfA have overlapping function in ribosome biogenesis in Escherichia coli.</title>
        <authorList>
            <person name="Inoue K."/>
            <person name="Chen J."/>
            <person name="Tan Q."/>
            <person name="Inouye M."/>
        </authorList>
    </citation>
    <scope>FUNCTION IN 30S RIBOSOMAL SUBUNIT BIOGENESIS</scope>
    <scope>FUNCTION IN RRNA PROCESSING</scope>
    <source>
        <strain>K12 / ATCC 35607 / JM83</strain>
        <strain>K12 / MC4100</strain>
    </source>
</reference>
<reference key="25">
    <citation type="journal article" date="2008" name="J. Bacteriol.">
        <title>Genetic interaction screens with ordered overexpression and deletion clone sets implicate the Escherichia coli GTPase YjeQ in late ribosome biogenesis.</title>
        <authorList>
            <person name="Campbell T.L."/>
            <person name="Brown E.D."/>
        </authorList>
    </citation>
    <scope>PARTIALLY SUPPRESSES A RSGA MUTANT</scope>
    <source>
        <strain>K12</strain>
    </source>
</reference>
<reference key="26">
    <citation type="journal article" date="2010" name="J. Mol. Biol.">
        <title>The effect of ribosome assembly cofactors on in vitro 30S subunit reconstitution.</title>
        <authorList>
            <person name="Bunner A.E."/>
            <person name="Nord S."/>
            <person name="Wikstrom P.M."/>
            <person name="Williamson J.R."/>
        </authorList>
    </citation>
    <scope>FUNCTION IN 30S SUBUNIT PROTEIN ASSEMBLY</scope>
</reference>
<reference key="27">
    <citation type="journal article" date="2016" name="Nucleic Acids Res.">
        <title>Binding properties of YjeQ (RsgA), RbfA, RimM and Era to assembly intermediates of the 30S subunit.</title>
        <authorList>
            <person name="Thurlow B."/>
            <person name="Davis J.H."/>
            <person name="Leong V."/>
            <person name="Moraes T.F."/>
            <person name="Williamson J.R."/>
            <person name="Ortega J."/>
        </authorList>
    </citation>
    <scope>SUBUNIT</scope>
    <source>
        <strain>K12 / BW25113</strain>
    </source>
</reference>
<reference key="28">
    <citation type="journal article" date="1999" name="Proc. Natl. Acad. Sci. U.S.A.">
        <title>Crystal structure of ERA: a GTPase-dependent cell cycle regulator containing an RNA binding motif.</title>
        <authorList>
            <person name="Chen X."/>
            <person name="Court D.L."/>
            <person name="Ji X."/>
        </authorList>
    </citation>
    <scope>X-RAY CRYSTALLOGRAPHY (2.4 ANGSTROMS)</scope>
    <source>
        <strain>K12 / W3110</strain>
    </source>
</reference>
<reference key="29">
    <citation type="journal article" date="2009" name="Proc. Natl. Acad. Sci. U.S.A.">
        <title>Structure of ERA in complex with the 3' end of 16S rRNA: implications for ribosome biogenesis.</title>
        <authorList>
            <person name="Tu C."/>
            <person name="Zhou X."/>
            <person name="Tropea J.E."/>
            <person name="Austin B.P."/>
            <person name="Waugh D.S."/>
            <person name="Court D.L."/>
            <person name="Ji X."/>
        </authorList>
    </citation>
    <scope>X-RAY CRYSTALLOGRAPHY (2.8 ANGSTROMS) IN COMPLEX WITH GDP</scope>
</reference>
<keyword id="KW-0002">3D-structure</keyword>
<keyword id="KW-0997">Cell inner membrane</keyword>
<keyword id="KW-1003">Cell membrane</keyword>
<keyword id="KW-0963">Cytoplasm</keyword>
<keyword id="KW-0903">Direct protein sequencing</keyword>
<keyword id="KW-0342">GTP-binding</keyword>
<keyword id="KW-0472">Membrane</keyword>
<keyword id="KW-0547">Nucleotide-binding</keyword>
<keyword id="KW-0597">Phosphoprotein</keyword>
<keyword id="KW-1185">Reference proteome</keyword>
<keyword id="KW-0690">Ribosome biogenesis</keyword>
<keyword id="KW-0694">RNA-binding</keyword>
<keyword id="KW-0699">rRNA-binding</keyword>